<sequence length="470" mass="52890">MHFSIPETESRSGDSGGSAYVAYNIHVNGVLHCRVRYSQLLGLREQLRKEYGANVLPAFPPKKLFSLTPAEVEQRREQLEKYMQAVRQDPLLGSSETFNSFLRRAQQETQQVPTEEVSLEVLLSNGQKVLVNVLTSDQTEDVLEAVAAKLDLPDDLIGYFSLFLVREKEDGAFSFVRKLQEFELPYVSVTSLRSQEYKIVLRKSYWDSAYDDDVMENRVGLNLLYAQTVSDIERGWILVTKEQHRQLKSLQEKVSKKEFLRLAQTLRHYGYLRFDACVADFPEKDCPVVVSAGNSELSLQLRLPGQQLREGSFRVTRMRCWRVTSSVPLPSGSTSSPGRGRGEVRLELAFEYLMSKDRLQWVTITSPQAIMMSICLQSMVDELMVKKSGGSIRKMLRRRVGGTLRRSDSQQAVKSPPLLESPDATRESMVKLSSKLSAVSLRGIGSPGTDASASDVHGNFAFEGIGDEDL</sequence>
<name>SNX17_PONAB</name>
<gene>
    <name type="primary">SNX17</name>
</gene>
<organism>
    <name type="scientific">Pongo abelii</name>
    <name type="common">Sumatran orangutan</name>
    <name type="synonym">Pongo pygmaeus abelii</name>
    <dbReference type="NCBI Taxonomy" id="9601"/>
    <lineage>
        <taxon>Eukaryota</taxon>
        <taxon>Metazoa</taxon>
        <taxon>Chordata</taxon>
        <taxon>Craniata</taxon>
        <taxon>Vertebrata</taxon>
        <taxon>Euteleostomi</taxon>
        <taxon>Mammalia</taxon>
        <taxon>Eutheria</taxon>
        <taxon>Euarchontoglires</taxon>
        <taxon>Primates</taxon>
        <taxon>Haplorrhini</taxon>
        <taxon>Catarrhini</taxon>
        <taxon>Hominidae</taxon>
        <taxon>Pongo</taxon>
    </lineage>
</organism>
<protein>
    <recommendedName>
        <fullName>Sorting nexin-17</fullName>
    </recommendedName>
</protein>
<proteinExistence type="evidence at transcript level"/>
<keyword id="KW-0963">Cytoplasm</keyword>
<keyword id="KW-0968">Cytoplasmic vesicle</keyword>
<keyword id="KW-0967">Endosome</keyword>
<keyword id="KW-0446">Lipid-binding</keyword>
<keyword id="KW-0472">Membrane</keyword>
<keyword id="KW-0597">Phosphoprotein</keyword>
<keyword id="KW-0653">Protein transport</keyword>
<keyword id="KW-1185">Reference proteome</keyword>
<keyword id="KW-0813">Transport</keyword>
<reference key="1">
    <citation type="submission" date="2004-11" db="EMBL/GenBank/DDBJ databases">
        <authorList>
            <consortium name="The German cDNA consortium"/>
        </authorList>
    </citation>
    <scope>NUCLEOTIDE SEQUENCE [LARGE SCALE MRNA]</scope>
    <source>
        <tissue>Brain cortex</tissue>
    </source>
</reference>
<feature type="chain" id="PRO_0000236207" description="Sorting nexin-17">
    <location>
        <begin position="1"/>
        <end position="470"/>
    </location>
</feature>
<feature type="domain" description="PX" evidence="4">
    <location>
        <begin position="1"/>
        <end position="109"/>
    </location>
</feature>
<feature type="domain" description="Ras-associating" evidence="5">
    <location>
        <begin position="115"/>
        <end position="206"/>
    </location>
</feature>
<feature type="region of interest" description="FERM-like" evidence="1">
    <location>
        <begin position="115"/>
        <end position="432"/>
    </location>
</feature>
<feature type="region of interest" description="PTB-like F3 module" evidence="1">
    <location>
        <begin position="270"/>
        <end position="432"/>
    </location>
</feature>
<feature type="region of interest" description="Disordered" evidence="6">
    <location>
        <begin position="400"/>
        <end position="425"/>
    </location>
</feature>
<feature type="binding site" evidence="1">
    <location>
        <position position="36"/>
    </location>
    <ligand>
        <name>a 1,2-diacyl-sn-glycero-3-phospho-(1D-myo-inositol-3-phosphate)</name>
        <dbReference type="ChEBI" id="CHEBI:58088"/>
    </ligand>
</feature>
<feature type="binding site" evidence="1">
    <location>
        <position position="38"/>
    </location>
    <ligand>
        <name>a 1,2-diacyl-sn-glycero-3-phospho-(1D-myo-inositol-3-phosphate)</name>
        <dbReference type="ChEBI" id="CHEBI:58088"/>
    </ligand>
</feature>
<feature type="binding site" evidence="1">
    <location>
        <position position="62"/>
    </location>
    <ligand>
        <name>a 1,2-diacyl-sn-glycero-3-phospho-(1D-myo-inositol-3-phosphate)</name>
        <dbReference type="ChEBI" id="CHEBI:58088"/>
    </ligand>
</feature>
<feature type="binding site" evidence="1">
    <location>
        <position position="75"/>
    </location>
    <ligand>
        <name>a 1,2-diacyl-sn-glycero-3-phospho-(1D-myo-inositol-3-phosphate)</name>
        <dbReference type="ChEBI" id="CHEBI:58088"/>
    </ligand>
</feature>
<feature type="modified residue" description="Phosphoserine" evidence="2">
    <location>
        <position position="336"/>
    </location>
</feature>
<feature type="modified residue" description="Phosphoserine" evidence="2">
    <location>
        <position position="407"/>
    </location>
</feature>
<feature type="modified residue" description="Phosphoserine" evidence="2">
    <location>
        <position position="409"/>
    </location>
</feature>
<feature type="modified residue" description="Phosphoserine" evidence="2">
    <location>
        <position position="415"/>
    </location>
</feature>
<feature type="modified residue" description="Phosphoserine" evidence="2">
    <location>
        <position position="421"/>
    </location>
</feature>
<feature type="modified residue" description="Phosphoserine" evidence="2">
    <location>
        <position position="437"/>
    </location>
</feature>
<feature type="modified residue" description="Phosphoserine" evidence="2">
    <location>
        <position position="440"/>
    </location>
</feature>
<evidence type="ECO:0000250" key="1"/>
<evidence type="ECO:0000250" key="2">
    <source>
        <dbReference type="UniProtKB" id="Q15036"/>
    </source>
</evidence>
<evidence type="ECO:0000250" key="3">
    <source>
        <dbReference type="UniProtKB" id="Q8BVL3"/>
    </source>
</evidence>
<evidence type="ECO:0000255" key="4">
    <source>
        <dbReference type="PROSITE-ProRule" id="PRU00147"/>
    </source>
</evidence>
<evidence type="ECO:0000255" key="5">
    <source>
        <dbReference type="PROSITE-ProRule" id="PRU00166"/>
    </source>
</evidence>
<evidence type="ECO:0000256" key="6">
    <source>
        <dbReference type="SAM" id="MobiDB-lite"/>
    </source>
</evidence>
<evidence type="ECO:0000305" key="7"/>
<comment type="function">
    <text evidence="2 3">Critical regulator of endosomal recycling of numerous surface proteins, including integrins, signaling receptor and channels (By similarity). Binds to NPxY sequences in the cytoplasmic tails of target cargos (By similarity). Associates with retriever and CCC complexes to prevent lysosomal degradation and promote cell surface recycling of numerous cargos such as integrins ITGB1, ITGB5 and their associated alpha subunits (By similarity). Also required for maintenance of normal cell surface levels of APP and LRP1 (By similarity). Interacts with membranes containing phosphatidylinositol 3-phosphate (PtdIns(3P)) (By similarity).</text>
</comment>
<comment type="subunit">
    <text evidence="2 3">Monomer (By similarity). Interacts with APP (via cytoplasmic YXNPXY motif) (By similarity). Interacts with KIF1B (By similarity). Interacts with the C-termini of P-selectin, PTC, LDLR, VLDLR, LRP1 and LRP8 (By similarity). Interacts with KRIT1 (via N-terminus) (By similarity). Interacts with HRAS (By similarity). Interacts with ITGB1 and ITGB5 (via NPxY motif) (By similarity). Interacts with CCDC22 and CCDC93; the interaction associates SNX17 with the CCC complex (By similarity). Interacts (via C-terminus) with VPS26C and VPS35L; the interactions are direct and associate SNX17 with the retriever complex (By similarity).</text>
</comment>
<comment type="subcellular location">
    <subcellularLocation>
        <location evidence="2">Cytoplasm</location>
    </subcellularLocation>
    <subcellularLocation>
        <location evidence="2">Early endosome</location>
    </subcellularLocation>
    <subcellularLocation>
        <location evidence="2">Cytoplasmic vesicle membrane</location>
        <topology evidence="2">Peripheral membrane protein</topology>
        <orientation evidence="2">Cytoplasmic side</orientation>
    </subcellularLocation>
</comment>
<comment type="domain">
    <text evidence="2">The PX domain mediates specific binding to phosphatidylinositol 3-phosphate (PtdIns(P3)). Required for association with endosomes.</text>
</comment>
<comment type="domain">
    <text evidence="2">The PTB-like F3 module within the FERM-like domain mediates cargo recognition via their NPxY sequences, while the F1 module (Ras-associating) is responsible for interaction with membrane-bound HRAS.</text>
</comment>
<comment type="similarity">
    <text evidence="7">Belongs to the sorting nexin family.</text>
</comment>
<dbReference type="EMBL" id="CR861350">
    <property type="protein sequence ID" value="CAH93411.1"/>
    <property type="molecule type" value="mRNA"/>
</dbReference>
<dbReference type="RefSeq" id="NP_001127002.1">
    <property type="nucleotide sequence ID" value="NM_001133530.1"/>
</dbReference>
<dbReference type="BMRB" id="Q5R4A5"/>
<dbReference type="SMR" id="Q5R4A5"/>
<dbReference type="STRING" id="9601.ENSPPYP00000014016"/>
<dbReference type="GeneID" id="100174025"/>
<dbReference type="KEGG" id="pon:100174025"/>
<dbReference type="CTD" id="9784"/>
<dbReference type="eggNOG" id="KOG3784">
    <property type="taxonomic scope" value="Eukaryota"/>
</dbReference>
<dbReference type="InParanoid" id="Q5R4A5"/>
<dbReference type="OrthoDB" id="5772781at2759"/>
<dbReference type="Proteomes" id="UP000001595">
    <property type="component" value="Unplaced"/>
</dbReference>
<dbReference type="GO" id="GO:0031410">
    <property type="term" value="C:cytoplasmic vesicle"/>
    <property type="evidence" value="ECO:0000250"/>
    <property type="project" value="UniProtKB"/>
</dbReference>
<dbReference type="GO" id="GO:0030659">
    <property type="term" value="C:cytoplasmic vesicle membrane"/>
    <property type="evidence" value="ECO:0007669"/>
    <property type="project" value="UniProtKB-SubCell"/>
</dbReference>
<dbReference type="GO" id="GO:0005829">
    <property type="term" value="C:cytosol"/>
    <property type="evidence" value="ECO:0000250"/>
    <property type="project" value="UniProtKB"/>
</dbReference>
<dbReference type="GO" id="GO:0005769">
    <property type="term" value="C:early endosome"/>
    <property type="evidence" value="ECO:0007669"/>
    <property type="project" value="UniProtKB-SubCell"/>
</dbReference>
<dbReference type="GO" id="GO:0005768">
    <property type="term" value="C:endosome"/>
    <property type="evidence" value="ECO:0000250"/>
    <property type="project" value="UniProtKB"/>
</dbReference>
<dbReference type="GO" id="GO:0035091">
    <property type="term" value="F:phosphatidylinositol binding"/>
    <property type="evidence" value="ECO:0000250"/>
    <property type="project" value="UniProtKB"/>
</dbReference>
<dbReference type="GO" id="GO:0032456">
    <property type="term" value="P:endocytic recycling"/>
    <property type="evidence" value="ECO:0000250"/>
    <property type="project" value="UniProtKB"/>
</dbReference>
<dbReference type="GO" id="GO:0006886">
    <property type="term" value="P:intracellular protein transport"/>
    <property type="evidence" value="ECO:0007669"/>
    <property type="project" value="TreeGrafter"/>
</dbReference>
<dbReference type="GO" id="GO:0007165">
    <property type="term" value="P:signal transduction"/>
    <property type="evidence" value="ECO:0007669"/>
    <property type="project" value="InterPro"/>
</dbReference>
<dbReference type="CDD" id="cd13337">
    <property type="entry name" value="FERM-like_C_SNX17"/>
    <property type="match status" value="1"/>
</dbReference>
<dbReference type="CDD" id="cd16121">
    <property type="entry name" value="FERM_F1_SNX17"/>
    <property type="match status" value="1"/>
</dbReference>
<dbReference type="CDD" id="cd06885">
    <property type="entry name" value="PX_SNX17_31"/>
    <property type="match status" value="1"/>
</dbReference>
<dbReference type="FunFam" id="1.20.80.60:FF:000001">
    <property type="entry name" value="Sorting nexin-17 isoform1"/>
    <property type="match status" value="1"/>
</dbReference>
<dbReference type="FunFam" id="2.30.29.30:FF:000145">
    <property type="entry name" value="Sorting nexin-17 isoform1"/>
    <property type="match status" value="1"/>
</dbReference>
<dbReference type="FunFam" id="3.10.20.90:FF:000094">
    <property type="entry name" value="Sorting nexin-17 isoform1"/>
    <property type="match status" value="1"/>
</dbReference>
<dbReference type="FunFam" id="3.30.1520.10:FF:000008">
    <property type="entry name" value="Sorting nexin-17 isoform1"/>
    <property type="match status" value="1"/>
</dbReference>
<dbReference type="Gene3D" id="1.20.80.60">
    <property type="match status" value="1"/>
</dbReference>
<dbReference type="Gene3D" id="3.10.20.90">
    <property type="entry name" value="Phosphatidylinositol 3-kinase Catalytic Subunit, Chain A, domain 1"/>
    <property type="match status" value="1"/>
</dbReference>
<dbReference type="Gene3D" id="3.30.1520.10">
    <property type="entry name" value="Phox-like domain"/>
    <property type="match status" value="1"/>
</dbReference>
<dbReference type="Gene3D" id="2.30.29.30">
    <property type="entry name" value="Pleckstrin-homology domain (PH domain)/Phosphotyrosine-binding domain (PTB)"/>
    <property type="match status" value="1"/>
</dbReference>
<dbReference type="InterPro" id="IPR011993">
    <property type="entry name" value="PH-like_dom_sf"/>
</dbReference>
<dbReference type="InterPro" id="IPR001683">
    <property type="entry name" value="PX_dom"/>
</dbReference>
<dbReference type="InterPro" id="IPR036871">
    <property type="entry name" value="PX_dom_sf"/>
</dbReference>
<dbReference type="InterPro" id="IPR000159">
    <property type="entry name" value="RA_dom"/>
</dbReference>
<dbReference type="InterPro" id="IPR048763">
    <property type="entry name" value="SNX17-31_FERM_F1"/>
</dbReference>
<dbReference type="InterPro" id="IPR048767">
    <property type="entry name" value="SNX17-31_FERM_F2"/>
</dbReference>
<dbReference type="InterPro" id="IPR040842">
    <property type="entry name" value="SNX17/31_FERM"/>
</dbReference>
<dbReference type="InterPro" id="IPR037836">
    <property type="entry name" value="SNX17_FERM-like_dom"/>
</dbReference>
<dbReference type="InterPro" id="IPR028666">
    <property type="entry name" value="SNX17_FERM_N"/>
</dbReference>
<dbReference type="PANTHER" id="PTHR12431">
    <property type="entry name" value="SORTING NEXIN 17 AND 27"/>
    <property type="match status" value="1"/>
</dbReference>
<dbReference type="PANTHER" id="PTHR12431:SF16">
    <property type="entry name" value="SORTING NEXIN-17"/>
    <property type="match status" value="1"/>
</dbReference>
<dbReference type="Pfam" id="PF00787">
    <property type="entry name" value="PX"/>
    <property type="match status" value="1"/>
</dbReference>
<dbReference type="Pfam" id="PF21273">
    <property type="entry name" value="SNX17-27-31_F1_FERM"/>
    <property type="match status" value="1"/>
</dbReference>
<dbReference type="Pfam" id="PF21271">
    <property type="entry name" value="SNX17-31_F2_FERM"/>
    <property type="match status" value="1"/>
</dbReference>
<dbReference type="Pfam" id="PF18116">
    <property type="entry name" value="SNX17_FERM_C"/>
    <property type="match status" value="1"/>
</dbReference>
<dbReference type="SMART" id="SM00312">
    <property type="entry name" value="PX"/>
    <property type="match status" value="1"/>
</dbReference>
<dbReference type="SUPFAM" id="SSF64268">
    <property type="entry name" value="PX domain"/>
    <property type="match status" value="1"/>
</dbReference>
<dbReference type="PROSITE" id="PS50195">
    <property type="entry name" value="PX"/>
    <property type="match status" value="1"/>
</dbReference>
<dbReference type="PROSITE" id="PS50200">
    <property type="entry name" value="RA"/>
    <property type="match status" value="1"/>
</dbReference>
<accession>Q5R4A5</accession>